<proteinExistence type="evidence at transcript level"/>
<dbReference type="EC" id="2.3.3.8" evidence="2"/>
<dbReference type="EMBL" id="BC108138">
    <property type="protein sequence ID" value="AAI08139.1"/>
    <property type="molecule type" value="mRNA"/>
</dbReference>
<dbReference type="RefSeq" id="NP_001032534.1">
    <property type="nucleotide sequence ID" value="NM_001037457.1"/>
</dbReference>
<dbReference type="SMR" id="Q32PF2"/>
<dbReference type="FunCoup" id="Q32PF2">
    <property type="interactions" value="3348"/>
</dbReference>
<dbReference type="STRING" id="9913.ENSBTAP00000059914"/>
<dbReference type="PaxDb" id="9913-ENSBTAP00000022258"/>
<dbReference type="Ensembl" id="ENSBTAT00000022258.5">
    <property type="protein sequence ID" value="ENSBTAP00000022258.4"/>
    <property type="gene ID" value="ENSBTAG00000016740.7"/>
</dbReference>
<dbReference type="GeneID" id="511135"/>
<dbReference type="KEGG" id="bta:511135"/>
<dbReference type="CTD" id="47"/>
<dbReference type="VEuPathDB" id="HostDB:ENSBTAG00000016740"/>
<dbReference type="VGNC" id="VGNC:25543">
    <property type="gene designation" value="ACLY"/>
</dbReference>
<dbReference type="eggNOG" id="KOG1254">
    <property type="taxonomic scope" value="Eukaryota"/>
</dbReference>
<dbReference type="GeneTree" id="ENSGT00940000154881"/>
<dbReference type="HOGENOM" id="CLU_006587_2_0_1"/>
<dbReference type="InParanoid" id="Q32PF2"/>
<dbReference type="OrthoDB" id="3261737at2759"/>
<dbReference type="TreeFam" id="TF300560"/>
<dbReference type="Reactome" id="R-BTA-6798695">
    <property type="pathway name" value="Neutrophil degranulation"/>
</dbReference>
<dbReference type="Reactome" id="R-BTA-75105">
    <property type="pathway name" value="Fatty acyl-CoA biosynthesis"/>
</dbReference>
<dbReference type="Proteomes" id="UP000009136">
    <property type="component" value="Chromosome 19"/>
</dbReference>
<dbReference type="Bgee" id="ENSBTAG00000016740">
    <property type="expression patterns" value="Expressed in diaphragm and 106 other cell types or tissues"/>
</dbReference>
<dbReference type="GO" id="GO:0005829">
    <property type="term" value="C:cytosol"/>
    <property type="evidence" value="ECO:0000250"/>
    <property type="project" value="UniProtKB"/>
</dbReference>
<dbReference type="GO" id="GO:0005524">
    <property type="term" value="F:ATP binding"/>
    <property type="evidence" value="ECO:0007669"/>
    <property type="project" value="UniProtKB-KW"/>
</dbReference>
<dbReference type="GO" id="GO:0003878">
    <property type="term" value="F:ATP citrate synthase activity"/>
    <property type="evidence" value="ECO:0000250"/>
    <property type="project" value="UniProtKB"/>
</dbReference>
<dbReference type="GO" id="GO:0046872">
    <property type="term" value="F:metal ion binding"/>
    <property type="evidence" value="ECO:0007669"/>
    <property type="project" value="UniProtKB-KW"/>
</dbReference>
<dbReference type="GO" id="GO:0006085">
    <property type="term" value="P:acetyl-CoA biosynthetic process"/>
    <property type="evidence" value="ECO:0000318"/>
    <property type="project" value="GO_Central"/>
</dbReference>
<dbReference type="GO" id="GO:0006101">
    <property type="term" value="P:citrate metabolic process"/>
    <property type="evidence" value="ECO:0007669"/>
    <property type="project" value="InterPro"/>
</dbReference>
<dbReference type="GO" id="GO:0006633">
    <property type="term" value="P:fatty acid biosynthetic process"/>
    <property type="evidence" value="ECO:0000318"/>
    <property type="project" value="GO_Central"/>
</dbReference>
<dbReference type="GO" id="GO:0008610">
    <property type="term" value="P:lipid biosynthetic process"/>
    <property type="evidence" value="ECO:0000250"/>
    <property type="project" value="UniProtKB"/>
</dbReference>
<dbReference type="CDD" id="cd06100">
    <property type="entry name" value="CCL_ACL-C"/>
    <property type="match status" value="1"/>
</dbReference>
<dbReference type="FunFam" id="1.10.230.10:FF:000004">
    <property type="entry name" value="ATP-citrate synthase"/>
    <property type="match status" value="1"/>
</dbReference>
<dbReference type="FunFam" id="3.30.470.110:FF:000001">
    <property type="entry name" value="ATP-citrate synthase"/>
    <property type="match status" value="1"/>
</dbReference>
<dbReference type="FunFam" id="3.40.50.261:FF:000003">
    <property type="entry name" value="ATP-citrate synthase subunit"/>
    <property type="match status" value="1"/>
</dbReference>
<dbReference type="FunFam" id="3.40.50.261:FF:000004">
    <property type="entry name" value="ATP-citrate synthase subunit"/>
    <property type="match status" value="1"/>
</dbReference>
<dbReference type="FunFam" id="3.40.50.720:FF:000024">
    <property type="entry name" value="Probable ATP-citrate synthase"/>
    <property type="match status" value="1"/>
</dbReference>
<dbReference type="Gene3D" id="3.30.470.110">
    <property type="match status" value="1"/>
</dbReference>
<dbReference type="Gene3D" id="1.10.580.10">
    <property type="entry name" value="Citrate Synthase, domain 1"/>
    <property type="match status" value="1"/>
</dbReference>
<dbReference type="Gene3D" id="1.10.230.10">
    <property type="entry name" value="Cytochrome P450-Terp, domain 2"/>
    <property type="match status" value="1"/>
</dbReference>
<dbReference type="Gene3D" id="3.40.50.720">
    <property type="entry name" value="NAD(P)-binding Rossmann-like Domain"/>
    <property type="match status" value="1"/>
</dbReference>
<dbReference type="Gene3D" id="3.40.50.261">
    <property type="entry name" value="Succinyl-CoA synthetase domains"/>
    <property type="match status" value="2"/>
</dbReference>
<dbReference type="InterPro" id="IPR014608">
    <property type="entry name" value="ATP-citrate_synthase"/>
</dbReference>
<dbReference type="InterPro" id="IPR017440">
    <property type="entry name" value="Cit_synth/succinyl-CoA_lig_AS"/>
</dbReference>
<dbReference type="InterPro" id="IPR032263">
    <property type="entry name" value="Citrate-bd"/>
</dbReference>
<dbReference type="InterPro" id="IPR016142">
    <property type="entry name" value="Citrate_synth-like_lrg_a-sub"/>
</dbReference>
<dbReference type="InterPro" id="IPR016143">
    <property type="entry name" value="Citrate_synth-like_sm_a-sub"/>
</dbReference>
<dbReference type="InterPro" id="IPR056749">
    <property type="entry name" value="Citrate_synth_N"/>
</dbReference>
<dbReference type="InterPro" id="IPR002020">
    <property type="entry name" value="Citrate_synthase"/>
</dbReference>
<dbReference type="InterPro" id="IPR036969">
    <property type="entry name" value="Citrate_synthase_sf"/>
</dbReference>
<dbReference type="InterPro" id="IPR033847">
    <property type="entry name" value="Citrt_syn/SCS-alpha_CS"/>
</dbReference>
<dbReference type="InterPro" id="IPR003781">
    <property type="entry name" value="CoA-bd"/>
</dbReference>
<dbReference type="InterPro" id="IPR036291">
    <property type="entry name" value="NAD(P)-bd_dom_sf"/>
</dbReference>
<dbReference type="InterPro" id="IPR017866">
    <property type="entry name" value="Succ-CoA_synthase_bsu_CS"/>
</dbReference>
<dbReference type="InterPro" id="IPR005811">
    <property type="entry name" value="SUCC_ACL_C"/>
</dbReference>
<dbReference type="InterPro" id="IPR016102">
    <property type="entry name" value="Succinyl-CoA_synth-like"/>
</dbReference>
<dbReference type="PANTHER" id="PTHR23118">
    <property type="entry name" value="ATP-CITRATE SYNTHASE"/>
    <property type="match status" value="1"/>
</dbReference>
<dbReference type="PANTHER" id="PTHR23118:SF42">
    <property type="entry name" value="ATP-CITRATE SYNTHASE"/>
    <property type="match status" value="1"/>
</dbReference>
<dbReference type="Pfam" id="PF16114">
    <property type="entry name" value="Citrate_bind"/>
    <property type="match status" value="1"/>
</dbReference>
<dbReference type="Pfam" id="PF00285">
    <property type="entry name" value="Citrate_synt"/>
    <property type="match status" value="1"/>
</dbReference>
<dbReference type="Pfam" id="PF24948">
    <property type="entry name" value="Citrate_synth_N"/>
    <property type="match status" value="1"/>
</dbReference>
<dbReference type="Pfam" id="PF02629">
    <property type="entry name" value="CoA_binding"/>
    <property type="match status" value="1"/>
</dbReference>
<dbReference type="Pfam" id="PF00549">
    <property type="entry name" value="Ligase_CoA"/>
    <property type="match status" value="1"/>
</dbReference>
<dbReference type="PIRSF" id="PIRSF036511">
    <property type="entry name" value="ATP_citrt_syn"/>
    <property type="match status" value="1"/>
</dbReference>
<dbReference type="SMART" id="SM00881">
    <property type="entry name" value="CoA_binding"/>
    <property type="match status" value="1"/>
</dbReference>
<dbReference type="SUPFAM" id="SSF48256">
    <property type="entry name" value="Citrate synthase"/>
    <property type="match status" value="1"/>
</dbReference>
<dbReference type="SUPFAM" id="SSF56059">
    <property type="entry name" value="Glutathione synthetase ATP-binding domain-like"/>
    <property type="match status" value="1"/>
</dbReference>
<dbReference type="SUPFAM" id="SSF51735">
    <property type="entry name" value="NAD(P)-binding Rossmann-fold domains"/>
    <property type="match status" value="1"/>
</dbReference>
<dbReference type="SUPFAM" id="SSF52210">
    <property type="entry name" value="Succinyl-CoA synthetase domains"/>
    <property type="match status" value="1"/>
</dbReference>
<dbReference type="PROSITE" id="PS01216">
    <property type="entry name" value="SUCCINYL_COA_LIG_1"/>
    <property type="match status" value="1"/>
</dbReference>
<dbReference type="PROSITE" id="PS00399">
    <property type="entry name" value="SUCCINYL_COA_LIG_2"/>
    <property type="match status" value="1"/>
</dbReference>
<dbReference type="PROSITE" id="PS01217">
    <property type="entry name" value="SUCCINYL_COA_LIG_3"/>
    <property type="match status" value="1"/>
</dbReference>
<accession>Q32PF2</accession>
<sequence length="1091" mass="119789">MSAKAISEQTGKELLYKYICTTSAIQNRFKYARVTPDTDWARLLQDHPWLLSQSLVVKPDQLIKRRGKLGLIGVNLTLDGVKSWLKPRLGQEATVGKATGFLKNFLIEPFVPHTQEEEFYVCIYATREGDYVLFHHEGGVDVGDVDAKAQKLLVGVDEKLNPEDIKKHLLVHAPEDKKEILASFISGLFNFYEDLYFTYLEINPLVVTKDGVYVLDLAAKVDATADYICKVKWGDIEFPPPFGREAYPEEAYIADLDAKSGASLKLTLLNPKGRIWTMVAGGGASVVYSDTICDLGGVNELANYGEYSGAPSEQQTYDYAKTILSLMTREKHPDGKILIIGGSIANFTNVAATFKGIVRAIRDYQGPLKEHEVTIFVRRGGPNYQEGLRVMGEVGKTTGIPIHVFGTETHMTAIVGMALGHRPIPNQPPTAAHTANFLLNASGSTSTPAPSRTASFSESRTDEVAPAKKAKPAMLQGKSATLFSRHTKAIVWGMQTRAVQGMLDFDYVCSRDEPSVAAMVYPFTGDHKQKFYWGHKEILIPVFKNMADAMKKHPEVDVLINFASLRSAYDSTMETMNYAQIRTIAIIAEGIPEALTRKLIKKADQKGVTIIGPATVGGIKPGCFKIGNTGGMLDNILASKLYRPGSVAYVSRSGGMSNELNNIISRTTDGVYEGVAIGGDRYPGSTFMDHVLRYQDTAGVKMIVVLGEIGGTEEYKICRGVTEGRITKPVVCWCIGTCAAMFSSEVQFGHAGACANQASETAVAKNQALKEAGVFVPRSFDELGEIIQSVYEDLVARGVIVPAQEVPPPTVPMDYSWARELGLIRKPASFMTSICDERGQELIYAGMPITEVFKEEMGIGGVLGLLWFQKRLPKYSCQFIEMCLMVTADHGPAVSGAHNTIICARAGKDLVSSLTSGLLTIGDRFGGALDAAAKMFSKAFDSGIIPMEFVNKMKKEGKLIMGIGHRVKSINNPDMRVQILKDYVRQHFPATPLLDYALEVEKITTSKKPNLILNVDGLIGVAFVDMLRHCGSFTREEADEYIDIGALNGIFVLGRSMGFIGHYLDQKRLKQGLYRHPWDDISYVLPEHMSM</sequence>
<protein>
    <recommendedName>
        <fullName>ATP-citrate synthase</fullName>
        <ecNumber evidence="2">2.3.3.8</ecNumber>
    </recommendedName>
    <alternativeName>
        <fullName>ATP-citrate (pro-S-)-lyase</fullName>
    </alternativeName>
    <alternativeName>
        <fullName>Citrate cleavage enzyme</fullName>
    </alternativeName>
</protein>
<organism>
    <name type="scientific">Bos taurus</name>
    <name type="common">Bovine</name>
    <dbReference type="NCBI Taxonomy" id="9913"/>
    <lineage>
        <taxon>Eukaryota</taxon>
        <taxon>Metazoa</taxon>
        <taxon>Chordata</taxon>
        <taxon>Craniata</taxon>
        <taxon>Vertebrata</taxon>
        <taxon>Euteleostomi</taxon>
        <taxon>Mammalia</taxon>
        <taxon>Eutheria</taxon>
        <taxon>Laurasiatheria</taxon>
        <taxon>Artiodactyla</taxon>
        <taxon>Ruminantia</taxon>
        <taxon>Pecora</taxon>
        <taxon>Bovidae</taxon>
        <taxon>Bovinae</taxon>
        <taxon>Bos</taxon>
    </lineage>
</organism>
<comment type="function">
    <text evidence="2">Catalyzes the cleavage of citrate into oxaloacetate and acetyl-CoA, the latter serving as common substrate in multiple biochemical reactions in protein, carbohydrate and lipid metabolism.</text>
</comment>
<comment type="catalytic activity">
    <reaction evidence="2">
        <text>oxaloacetate + acetyl-CoA + ADP + phosphate = citrate + ATP + CoA</text>
        <dbReference type="Rhea" id="RHEA:21160"/>
        <dbReference type="ChEBI" id="CHEBI:16452"/>
        <dbReference type="ChEBI" id="CHEBI:16947"/>
        <dbReference type="ChEBI" id="CHEBI:30616"/>
        <dbReference type="ChEBI" id="CHEBI:43474"/>
        <dbReference type="ChEBI" id="CHEBI:57287"/>
        <dbReference type="ChEBI" id="CHEBI:57288"/>
        <dbReference type="ChEBI" id="CHEBI:456216"/>
        <dbReference type="EC" id="2.3.3.8"/>
    </reaction>
    <physiologicalReaction direction="right-to-left" evidence="2">
        <dbReference type="Rhea" id="RHEA:21162"/>
    </physiologicalReaction>
</comment>
<comment type="cofactor">
    <cofactor evidence="2">
        <name>Mg(2+)</name>
        <dbReference type="ChEBI" id="CHEBI:18420"/>
    </cofactor>
</comment>
<comment type="activity regulation">
    <text evidence="2">Phosphorylation results in activation of its activity (By similarity). Glucose 6-phosphate, fructose 6-phosphate, fructose 2,6-bisphosphate, ribulose 5-phosphate, and fructose 1,6-bisphosphate also act as activators (By similarity).</text>
</comment>
<comment type="subunit">
    <text evidence="2">Homotetramer.</text>
</comment>
<comment type="subcellular location">
    <subcellularLocation>
        <location evidence="2">Cytoplasm</location>
        <location evidence="2">Cytosol</location>
    </subcellularLocation>
</comment>
<comment type="PTM">
    <text evidence="1 2">Phosphorylated by PKA and GSK3 in a sequential manner; phosphorylation results in activation of its activity (By similarity). Phosphorylation on Thr-447 and Ser-451 depends on the phosphorylation state of Ser-455 (By similarity). Phosphorylation on Ser-455 is decreased by prior phosphorylation on the other 2 residues (By similarity). Phosphorylated at Ser-455 by BCKDK and dephosphorylated by protein phosphatase PPM1K.</text>
</comment>
<comment type="PTM">
    <text evidence="2">ISGylated.</text>
</comment>
<comment type="PTM">
    <text evidence="2">Acetylated at Lys-530, Lys-536 and Lys-544 by KAT2B/PCAF (By similarity). Acetylation is promoted by glucose and stabilizes the protein, probably by preventing ubiquitination at the same sites (By similarity). Acetylation promotes de novo lipid synthesis (By similarity). Deacetylated by SIRT2 (By similarity).</text>
</comment>
<comment type="PTM">
    <text evidence="2 3">Ubiquitinated at Lys-530, Lys-536 and Lys-544 by the BCR(KLHL25) E3 ubiquitin ligase complex and UBR4, leading to its degradation (By similarity). Ubiquitination is probably inhibited by acetylation at same site (By similarity). BCR(KLHL25)-mediated degradation of ACLY promotes fatty acid oxidation and is required for differentiation of inducible regulatory T (iTreg) cells (By similarity).</text>
</comment>
<comment type="similarity">
    <text evidence="6">In the N-terminal section; belongs to the succinate/malate CoA ligase beta subunit family.</text>
</comment>
<comment type="similarity">
    <text evidence="6">In the C-terminal section; belongs to the succinate/malate CoA ligase alpha subunit family.</text>
</comment>
<name>ACLY_BOVIN</name>
<keyword id="KW-0007">Acetylation</keyword>
<keyword id="KW-0067">ATP-binding</keyword>
<keyword id="KW-0963">Cytoplasm</keyword>
<keyword id="KW-1017">Isopeptide bond</keyword>
<keyword id="KW-0444">Lipid biosynthesis</keyword>
<keyword id="KW-0443">Lipid metabolism</keyword>
<keyword id="KW-0460">Magnesium</keyword>
<keyword id="KW-0479">Metal-binding</keyword>
<keyword id="KW-0547">Nucleotide-binding</keyword>
<keyword id="KW-0597">Phosphoprotein</keyword>
<keyword id="KW-1185">Reference proteome</keyword>
<keyword id="KW-0808">Transferase</keyword>
<keyword id="KW-0832">Ubl conjugation</keyword>
<feature type="chain" id="PRO_0000270815" description="ATP-citrate synthase">
    <location>
        <begin position="1"/>
        <end position="1091"/>
    </location>
</feature>
<feature type="domain" description="ATP-grasp">
    <location>
        <begin position="4"/>
        <end position="265"/>
    </location>
</feature>
<feature type="region of interest" description="Disordered" evidence="5">
    <location>
        <begin position="442"/>
        <end position="471"/>
    </location>
</feature>
<feature type="compositionally biased region" description="Low complexity" evidence="5">
    <location>
        <begin position="442"/>
        <end position="457"/>
    </location>
</feature>
<feature type="active site" description="Tele-phosphohistidine intermediate" evidence="2">
    <location>
        <position position="750"/>
    </location>
</feature>
<feature type="binding site" evidence="2">
    <location>
        <position position="58"/>
    </location>
    <ligand>
        <name>ATP</name>
        <dbReference type="ChEBI" id="CHEBI:30616"/>
    </ligand>
</feature>
<feature type="binding site" evidence="2">
    <location>
        <position position="66"/>
    </location>
    <ligand>
        <name>ATP</name>
        <dbReference type="ChEBI" id="CHEBI:30616"/>
    </ligand>
</feature>
<feature type="binding site" evidence="2">
    <location>
        <position position="67"/>
    </location>
    <ligand>
        <name>ATP</name>
        <dbReference type="ChEBI" id="CHEBI:30616"/>
    </ligand>
</feature>
<feature type="binding site" evidence="2">
    <location>
        <position position="109"/>
    </location>
    <ligand>
        <name>ATP</name>
        <dbReference type="ChEBI" id="CHEBI:30616"/>
    </ligand>
</feature>
<feature type="binding site" evidence="2">
    <location>
        <position position="111"/>
    </location>
    <ligand>
        <name>ATP</name>
        <dbReference type="ChEBI" id="CHEBI:30616"/>
    </ligand>
</feature>
<feature type="binding site" evidence="2">
    <location>
        <position position="118"/>
    </location>
    <ligand>
        <name>ATP</name>
        <dbReference type="ChEBI" id="CHEBI:30616"/>
    </ligand>
</feature>
<feature type="binding site" evidence="2">
    <location>
        <position position="216"/>
    </location>
    <ligand>
        <name>ATP</name>
        <dbReference type="ChEBI" id="CHEBI:30616"/>
    </ligand>
</feature>
<feature type="binding site" evidence="2">
    <location>
        <position position="257"/>
    </location>
    <ligand>
        <name>Mg(2+)</name>
        <dbReference type="ChEBI" id="CHEBI:18420"/>
    </ligand>
</feature>
<feature type="binding site" evidence="2">
    <location>
        <position position="260"/>
    </location>
    <ligand>
        <name>Mg(2+)</name>
        <dbReference type="ChEBI" id="CHEBI:18420"/>
    </ligand>
</feature>
<feature type="binding site" evidence="2">
    <location>
        <position position="262"/>
    </location>
    <ligand>
        <name>Mg(2+)</name>
        <dbReference type="ChEBI" id="CHEBI:18420"/>
    </ligand>
</feature>
<feature type="binding site" evidence="2">
    <location>
        <position position="309"/>
    </location>
    <ligand>
        <name>citrate</name>
        <dbReference type="ChEBI" id="CHEBI:16947"/>
    </ligand>
</feature>
<feature type="binding site" evidence="2">
    <location>
        <position position="346"/>
    </location>
    <ligand>
        <name>citrate</name>
        <dbReference type="ChEBI" id="CHEBI:16947"/>
    </ligand>
</feature>
<feature type="binding site" evidence="2">
    <location>
        <position position="348"/>
    </location>
    <ligand>
        <name>citrate</name>
        <dbReference type="ChEBI" id="CHEBI:16947"/>
    </ligand>
</feature>
<feature type="binding site" evidence="2">
    <location>
        <position position="364"/>
    </location>
    <ligand>
        <name>citrate</name>
        <dbReference type="ChEBI" id="CHEBI:16947"/>
    </ligand>
</feature>
<feature type="binding site" evidence="2">
    <location>
        <position position="379"/>
    </location>
    <ligand>
        <name>citrate</name>
        <dbReference type="ChEBI" id="CHEBI:16947"/>
    </ligand>
</feature>
<feature type="binding site" evidence="4">
    <location>
        <begin position="769"/>
        <end position="779"/>
    </location>
    <ligand>
        <name>CoA</name>
        <dbReference type="ChEBI" id="CHEBI:57287"/>
    </ligand>
</feature>
<feature type="modified residue" description="Phosphotyrosine" evidence="2">
    <location>
        <position position="131"/>
    </location>
</feature>
<feature type="modified residue" description="Phosphoserine" evidence="3">
    <location>
        <position position="263"/>
    </location>
</feature>
<feature type="modified residue" description="Phosphothreonine" evidence="1">
    <location>
        <position position="447"/>
    </location>
</feature>
<feature type="modified residue" description="Phosphoserine" evidence="1">
    <location>
        <position position="451"/>
    </location>
</feature>
<feature type="modified residue" description="Phosphoserine; by PKA and PKB/AKT1 or PKB/AKT2 or BCKDK" evidence="2">
    <location>
        <position position="455"/>
    </location>
</feature>
<feature type="modified residue" description="Phosphoserine" evidence="2">
    <location>
        <position position="459"/>
    </location>
</feature>
<feature type="modified residue" description="N6-acetyllysine; alternate" evidence="2">
    <location>
        <position position="530"/>
    </location>
</feature>
<feature type="modified residue" description="N6-acetyllysine; alternate" evidence="2">
    <location>
        <position position="536"/>
    </location>
</feature>
<feature type="modified residue" description="N6-acetyllysine; alternate" evidence="2">
    <location>
        <position position="544"/>
    </location>
</feature>
<feature type="modified residue" description="Phosphothreonine" evidence="2">
    <location>
        <position position="629"/>
    </location>
</feature>
<feature type="modified residue" description="Phosphoserine" evidence="2">
    <location>
        <position position="653"/>
    </location>
</feature>
<feature type="modified residue" description="Phosphotyrosine" evidence="2">
    <location>
        <position position="672"/>
    </location>
</feature>
<feature type="modified residue" description="Phosphoserine" evidence="2">
    <location>
        <position position="829"/>
    </location>
</feature>
<feature type="modified residue" description="N6-acetyllysine" evidence="2">
    <location>
        <position position="938"/>
    </location>
</feature>
<feature type="modified residue" description="N6-acetyllysine" evidence="2">
    <location>
        <position position="958"/>
    </location>
</feature>
<feature type="modified residue" description="N6-acetyllysine" evidence="3">
    <location>
        <position position="968"/>
    </location>
</feature>
<feature type="modified residue" description="N6-acetyllysine" evidence="2">
    <location>
        <position position="1067"/>
    </location>
</feature>
<feature type="modified residue" description="Phosphoserine" evidence="2">
    <location>
        <position position="1090"/>
    </location>
</feature>
<feature type="cross-link" description="Glycyl lysine isopeptide (Lys-Gly) (interchain with G-Cter in ubiquitin); alternate" evidence="2">
    <location>
        <position position="530"/>
    </location>
</feature>
<feature type="cross-link" description="Glycyl lysine isopeptide (Lys-Gly) (interchain with G-Cter in ubiquitin); alternate" evidence="2">
    <location>
        <position position="536"/>
    </location>
</feature>
<feature type="cross-link" description="Glycyl lysine isopeptide (Lys-Gly) (interchain with G-Cter in ubiquitin); alternate" evidence="2">
    <location>
        <position position="544"/>
    </location>
</feature>
<gene>
    <name type="primary">ACLY</name>
</gene>
<evidence type="ECO:0000250" key="1">
    <source>
        <dbReference type="UniProtKB" id="P16638"/>
    </source>
</evidence>
<evidence type="ECO:0000250" key="2">
    <source>
        <dbReference type="UniProtKB" id="P53396"/>
    </source>
</evidence>
<evidence type="ECO:0000250" key="3">
    <source>
        <dbReference type="UniProtKB" id="Q91V92"/>
    </source>
</evidence>
<evidence type="ECO:0000255" key="4"/>
<evidence type="ECO:0000256" key="5">
    <source>
        <dbReference type="SAM" id="MobiDB-lite"/>
    </source>
</evidence>
<evidence type="ECO:0000305" key="6"/>
<reference key="1">
    <citation type="submission" date="2005-10" db="EMBL/GenBank/DDBJ databases">
        <authorList>
            <consortium name="NIH - Mammalian Gene Collection (MGC) project"/>
        </authorList>
    </citation>
    <scope>NUCLEOTIDE SEQUENCE [LARGE SCALE MRNA]</scope>
    <source>
        <strain>Hereford</strain>
        <tissue>Ascending colon</tissue>
    </source>
</reference>